<proteinExistence type="inferred from homology"/>
<sequence length="2292" mass="255428">MATTMEQEICAHSLTFKGCPKCSALQYRNGFYLLKYDEEWYPEELLTDGEDDVFDPELDMEVVFELQGNSTSSDKNNSSSDGNEGVIINNFYSNQYQNSIDLSANATGSDPPRTYGQFSNLLSGAVNAFSNMIPLLADQNTEEMENLSDRVLQDTAGNTVTNTQSTVGRLVGYGAVHDGEHPASCADTASEKILAVERYYTFKVNDWTSTQKPFEYIRIPLPHVLSGEDGGVFGAALRRHYLVKTGWRVQVQCNASQFHAGSLLVFMAPEYPTLDAFAMDNRWSKDNLPNGTKTQTNRKGPFAMDHQNFWQWTLYPHQFLNLRTNTTVDLEVPYVNIAPTSSWTQHASWTLVIAVVAPLTYSTGASTSLDITASIQPVRPVFNGLRHETLSRQSPIPVTIREHAGTWYSTLPDSTVPIYGKTPVAPANYMVGEYKDFLEIAQIPTFIGNKIPNAVPYIEASNTAVKTQPLATYQVTLSCSCLANTFLAALSRNFAQYRGSLVYTFVFTGTAMMKGKFLIAYTPPGAGKPTSRDQAMQATYAIWDLGLNSSYSFTVPFISPTHFRMVGTDQVNITNVDGWVTVWQLTPLTYPPGCPTSAKILTMVSAGKDFSLKMPISPAPWSPQGVENAERGVTEDTDATADFVAQPVYLPENQTKVAFFYDRSSPIGAFAVKSGSLESGFAPFSNETCPNSVILTPGPQFDPAYDQLRPQRLTEIWGNGNEETSKVFPLKSKQDYSFCLFSPFVYYKCDLEVTLSPHTSGNHGLLVRWCPTGTPAKPTTQVLHEVSSLSEGRTPQVYSAGPGISNQISFVVPYNSPLSVLPAVWYNGHKRFDNTGSLGIAPNSDFGTLFFAGTKPDIKFTVYLRYKNMRVFCPRPTVFFPWPSSGDKIDMTPRAGVLMLESPNALDISRTYPTLHILIQFNHGGLEIRLFRHGMFWAEAHADVILRSRTKQISFLNNGSFPSMDARAPWNPWKNTYHAVLRAEPYRVTMDVYHKRIRPFRLPLVQKEWNVREENVFGLYGIFNAHYAGYFADLLIHDIETNPGPFMAKPKKQVFQTQGAAVSSMAQTLLPNDLASKVMGSAFTALLDANEDAQKAMRIIKTLSSLSDAWENVKETLNNPEFWKQLLSRCVQLIAGMTIAVMHPDPLTLLCLGTLTAAEITSQTSLCEEIVAKFKKIFTTPPPRFPTISLFQQQSPLKQVNDVFSLAKNLDWAVKTVEKVVDWFGTWVVQEEKEQTLDQLLQRFPEHAKRISDLRNGMSAYVECKESFDFFEKLYNQAVKEKRTGIAAVCEKFRQKHDHATARCEPVVIVLRGDAGQGKSLSSQVIAQAVSKTIFGRQSVYSLPPDSDFFDGYENQFAAIMDDLGQNPDGSDFTTFCQMVSTTNFLPNMASLERNGTPFTSQIVVATTNLPEFRPVTIAHYPAVERRITFDYSVSAGPVCSKTEAGYKVLDVERAFRPTGDAPLPCFQNNCLFLEKAGLQFRDNRTKEILSLVDVIERAVARIERKKKVLTTVQTLVAQAPVDEVSFHSVVQQLKARQEATDEQLEELQEAFAKTQERSSVFSDWMKISAMLCAATLALSQVVKMAKTVKQMVRPDLVRVQLDEQEQGPYNEAVRAKPKTLQLLDIQGPNPVMDFEKYVAKFVTAPIDFVYPTGVSTQTCLLVKGRTLAVNRHMAESDWSSIVVRGVTHARSTVRILAIAKAGKETDVSFIRLSSGPLFRDNTSKFVKADDVLPATSAPVIGIMNTDIPMMFTGTFLKAGVSVPVETGQTFNHCIHYKANTRKGWCGSALLADLGGKKKILGMHSAGSMGRTAASIVSQEMICAVVSAFEPQGALERLPDGPRIHVPRKTALRPTVARRVFQPAYAPAVLSKFDPRTEADVDEVAFSKHTSNQESLPPVFRMVAKEYANRVFTLLGRDNGRLTVKQALEGLEGMDPMDKNTSPGLPYTALGMRRTDVVDWESATLIPYAADRLKKMNEGDFSDIVYQTFLKDELRPVEKVQAAKTRIVDVPPFEHCILGRQLLGRFASKFQTQPGLELGSAIGCDPDVHWTAFGVAMQGFERVYDVDYSNFDSTHSVAMFRLLAEEFFTPENGFDPLVKEYLESLAISTHAFEEKRYLITGGLPSGCAATSMLNTIMNNIIIRAGLYLTYKNFEFDDVKVLSYGDDLLVATNYQLNFDKVRASLAKTGYKITPANKTSTFPLDSTLEDVVFLKRKFKKEGPLYRPVMNREALEAMLSYYRPGTLSEKLTSITMLAVHSGKPEYDRLFAPFREVGVVVPSFESVEYRWRSLFW</sequence>
<comment type="function">
    <molecule>Leader protein</molecule>
    <text evidence="9">Forms a complex with host RAN and probably binds to exportins carrying activated MAPK in order to mediate the hyperphosphorylation of host Phe/Gly containing nuclear pore proteins (Nups) resulting in cessation of active nucleocytoplasmic transport (By similarity). Proteins with NLS signals fail to import, cellular mRNAs fail to export, and some proteins small enough for diffusion are not retained anymore (efflux) (By similarity). The resulting inhibition of cellular protein synthesis serves to ensure maximal viral gene expression and to evade host immune response (By similarity).</text>
</comment>
<comment type="function">
    <molecule>Capsid protein VP1</molecule>
    <text evidence="7">Forms an icosahedral capsid of pseudo T=3 symmetry with capsid proteins VP2 and VP3. Together they form an icosahedral capsid composed of 60 copies of each VP1, VP2, and VP3, with a diameter of approximately 300 Angstroms. VP4 lies on the inner surface of the protein shell formed by VP1, VP2 and VP3. All the three latter proteins contain a beta-sheet structure called beta-barrel jelly roll. VP1 is situated at the 12 fivefold axes, whereas VP2 and VP3 are located at the quasi-sixfold axes.</text>
</comment>
<comment type="function">
    <molecule>Capsid protein VP2</molecule>
    <text evidence="7">Forms an icosahedral capsid of pseudo T=3 symmetry with capsid proteins VP2 and VP3. Together they form an icosahedral capsid composed of 60 copies of each VP1, VP2, and VP3, with a diameter of approximately 300 Angstroms. VP4 lies on the inner surface of the protein shell formed by VP1, VP2 and VP3. All the three latter proteins contain a beta-sheet structure called beta-barrel jelly roll. VP1 is situated at the 12 fivefold axes, whereas VP2 and VP3 are located at the quasi-sixfold axes.</text>
</comment>
<comment type="function">
    <molecule>Capsid protein VP3</molecule>
    <text evidence="7">Forms an icosahedral capsid of pseudo T=3 symmetry with capsid proteins VP2 and VP3. Together they form an icosahedral capsid composed of 60 copies of each VP1, VP2, and VP3, with a diameter of approximately 300 Angstroms. VP4 lies on the inner surface of the protein shell formed by VP1, VP2 and VP3. All the three latter proteins contain a beta-sheet structure called beta-barrel jelly roll. VP1 is situated at the 12 fivefold axes, whereas VP2 and VP3 are located at the quasi-sixfold axes.</text>
</comment>
<comment type="function">
    <molecule>Capsid protein VP4</molecule>
    <text evidence="2 7">Lies on the inner surface of the capsid shell (By similarity). After binding to the host receptor, the capsid undergoes conformational changes (By similarity). Capsid protein VP4 is released, capsid protein VP1 N-terminus is externalized, and together, they shape a pore in the host membrane through which the viral genome is translocated into the host cell cytoplasm (By similarity). After genome has been released, the channel shrinks (By similarity).</text>
</comment>
<comment type="function">
    <molecule>Capsid protein VP0</molecule>
    <text evidence="6">VP0 precursor is a component of immature procapsids.</text>
</comment>
<comment type="function">
    <molecule>Protein 2A</molecule>
    <text evidence="7 9">Involved in host translation shutoff by inhibiting cap-dependent mRNA translation (By similarity). Nuclear localization is required for this function (By similarity). The resulting inhibition of cellular protein synthesis serves to ensure maximal viral gene expression and to evade host immune response (By similarity). Inhibits the phosphorylation of the leader protein (By similarity). Binds to the RNA stem-loop essential for the ribosomal frameshift event and trans-activates the production of protein 2B* (By similarity).</text>
</comment>
<comment type="function">
    <molecule>Protein 2B</molecule>
    <text evidence="1">Affects membrane integrity and causes an increase in membrane permeability.</text>
</comment>
<comment type="function">
    <molecule>Protein 2C</molecule>
    <text evidence="3 4 5">Associates with and induces structural rearrangements of intracellular membranes (By similarity). It displays RNA-binding, nucleotide binding and NTPase activities (By similarity). Interacts with IFIH1/MDA5 to inhibit the induction of the IFN-beta signal pathway (By similarity).</text>
</comment>
<comment type="function">
    <molecule>Protein 3A</molecule>
    <text evidence="1">Serves as membrane anchor via its hydrophobic domain.</text>
</comment>
<comment type="function">
    <molecule>VPg</molecule>
    <text evidence="3">Forms a primer, VPg-pU, which is utilized by the polymerase for the initiation of RNA chains.</text>
</comment>
<comment type="function">
    <molecule>Protease 3C</molecule>
    <text evidence="3 7">Cysteine protease that generates mature viral proteins from the precursor polyprotein (By similarity). In addition to its proteolytic activity, it binds to viral RNA, and thus influences viral genome replication. RNA and substrate cooperatively bind to the protease. Cleaves host PABP1, this cleavage is important for viral replication (By similarity). Cleaves host TANK and disrupts the TANK-TBK1-IKKepsilon-IRF3 complex, thereby inhibiting the induction of the IFN-beta signal pathway (By similarity).</text>
</comment>
<comment type="function">
    <molecule>RNA-directed RNA polymerase</molecule>
    <text evidence="7">Replicates the genomic and antigenomic RNAs by recognizing replications specific signals (By similarity). Performs VPg uridylylation (By similarity).</text>
</comment>
<comment type="catalytic activity">
    <reaction evidence="11">
        <text>RNA(n) + a ribonucleoside 5'-triphosphate = RNA(n+1) + diphosphate</text>
        <dbReference type="Rhea" id="RHEA:21248"/>
        <dbReference type="Rhea" id="RHEA-COMP:14527"/>
        <dbReference type="Rhea" id="RHEA-COMP:17342"/>
        <dbReference type="ChEBI" id="CHEBI:33019"/>
        <dbReference type="ChEBI" id="CHEBI:61557"/>
        <dbReference type="ChEBI" id="CHEBI:140395"/>
        <dbReference type="EC" id="2.7.7.48"/>
    </reaction>
</comment>
<comment type="catalytic activity">
    <reaction evidence="14">
        <text>ATP + H2O = ADP + phosphate + H(+)</text>
        <dbReference type="Rhea" id="RHEA:13065"/>
        <dbReference type="ChEBI" id="CHEBI:15377"/>
        <dbReference type="ChEBI" id="CHEBI:15378"/>
        <dbReference type="ChEBI" id="CHEBI:30616"/>
        <dbReference type="ChEBI" id="CHEBI:43474"/>
        <dbReference type="ChEBI" id="CHEBI:456216"/>
        <dbReference type="EC" id="3.6.4.13"/>
    </reaction>
</comment>
<comment type="catalytic activity">
    <reaction evidence="13">
        <text>Selective cleavage of Gln-|-Gly bond in the poliovirus polyprotein. In other picornavirus reactions Glu may be substituted for Gln, and Ser or Thr for Gly.</text>
        <dbReference type="EC" id="3.4.22.28"/>
    </reaction>
</comment>
<comment type="subunit">
    <molecule>Protease 3C</molecule>
    <text evidence="3 9">Interacts with host TRIM22; this interaction leads to the ubiquitination of protease 3C and may restrict the virus replication (By similarity).</text>
</comment>
<comment type="subunit">
    <molecule>Protein 2A</molecule>
    <text evidence="3 9">Interacts with host EIF4E (By similarity). Interacts with the leader protein (By similarity).</text>
</comment>
<comment type="subunit">
    <molecule>Leader protein</molecule>
    <text evidence="3 9">Interacts with host RAN; the complex L-RAN recruits cellular kinases responsible for the L-induced nucleocytoplasmic trafficking inhibition (By similarity). The complex L-RAN can further bind to the host exportins XPO1/CRM1 and CSE1L/CAS (By similarity). Interacts with the protein 2A (By similarity).</text>
</comment>
<comment type="subunit">
    <molecule>Protein 2C</molecule>
    <text evidence="3 9">Interacts with host IFIH1/MDA5; this interaction inhibits the induction of the IFN-beta signal pathway (By similarity).</text>
</comment>
<comment type="subcellular location">
    <molecule>Capsid protein VP2</molecule>
    <subcellularLocation>
        <location evidence="7">Virion</location>
    </subcellularLocation>
    <subcellularLocation>
        <location evidence="14">Host cytoplasm</location>
    </subcellularLocation>
</comment>
<comment type="subcellular location">
    <molecule>Capsid protein VP3</molecule>
    <subcellularLocation>
        <location evidence="7">Virion</location>
    </subcellularLocation>
    <subcellularLocation>
        <location evidence="14">Host cytoplasm</location>
    </subcellularLocation>
</comment>
<comment type="subcellular location">
    <molecule>Capsid protein VP1</molecule>
    <subcellularLocation>
        <location evidence="7">Virion</location>
    </subcellularLocation>
    <subcellularLocation>
        <location evidence="14">Host cytoplasm</location>
    </subcellularLocation>
</comment>
<comment type="subcellular location">
    <molecule>Protein 2A</molecule>
    <subcellularLocation>
        <location evidence="9">Host nucleus</location>
        <location evidence="9">Host nucleolus</location>
    </subcellularLocation>
</comment>
<comment type="subcellular location">
    <molecule>Protein 2B</molecule>
    <subcellularLocation>
        <location evidence="14">Host cytoplasmic vesicle membrane</location>
        <topology evidence="14">Peripheral membrane protein</topology>
        <orientation evidence="14">Cytoplasmic side</orientation>
    </subcellularLocation>
    <text evidence="14">Probably localizes to the surface of intracellular membrane vesicles that are induced after virus infection as the site for viral RNA replication. These vesicles are probably autophagosome-like vesicles.</text>
</comment>
<comment type="subcellular location">
    <molecule>Protein 2C</molecule>
    <subcellularLocation>
        <location evidence="14">Host cytoplasmic vesicle membrane</location>
        <topology evidence="14">Peripheral membrane protein</topology>
        <orientation evidence="14">Cytoplasmic side</orientation>
    </subcellularLocation>
    <text evidence="14">Probably localizes to the surface of intracellular membrane vesicles that are induced after virus infection as the site for viral RNA replication. These vesicles are probably autophagosome-like vesicles.</text>
</comment>
<comment type="subcellular location">
    <molecule>Protein 3A</molecule>
    <subcellularLocation>
        <location evidence="3">Host cytoplasmic vesicle membrane</location>
        <topology evidence="14">Peripheral membrane protein</topology>
        <orientation evidence="14">Cytoplasmic side</orientation>
    </subcellularLocation>
    <text evidence="3">Probably localizes to the surface of intracellular membrane vesicles that are induced after virus infection as the site for viral RNA replication. These vesicles are probably autophagosome-like vesicles.</text>
</comment>
<comment type="subcellular location">
    <molecule>VPg</molecule>
    <subcellularLocation>
        <location evidence="14">Virion</location>
    </subcellularLocation>
</comment>
<comment type="subcellular location">
    <molecule>Protease 3C</molecule>
    <subcellularLocation>
        <location evidence="14">Host cytoplasm</location>
    </subcellularLocation>
</comment>
<comment type="subcellular location">
    <molecule>RNA-directed RNA polymerase</molecule>
    <subcellularLocation>
        <location evidence="14">Host cytoplasmic vesicle membrane</location>
        <topology evidence="14">Peripheral membrane protein</topology>
        <orientation evidence="14">Cytoplasmic side</orientation>
    </subcellularLocation>
    <text evidence="14">Probably localizes to the surface of intracellular membrane vesicles that are induced after virus infection as the site for viral RNA replication. These vesicles are probably autophagosome-like vesicles.</text>
</comment>
<comment type="PTM">
    <molecule>Leader protein</molecule>
    <text evidence="9">Phosphorylated.</text>
</comment>
<comment type="PTM">
    <molecule>Genome polyprotein</molecule>
    <text evidence="3">Specific enzymatic cleavages by the viral protease in vivo yield a variety of precursors and mature proteins (By similarity). The polyprotein seems to be cotranslationally cleaved at the 2A/2B junction by a ribosomal skip from one codon to the next without formation of a peptide bond (By similarity). This process would release the P1-2A peptide from the translational complex (By similarity).</text>
</comment>
<comment type="PTM">
    <molecule>Capsid protein VP0</molecule>
    <text evidence="2">During virion maturation, immature virions are rendered infectious following cleavage of VP0 into VP4 and VP2. This maturation seems to be an autocatalytic event triggered by the presence of RNA in the capsid and is followed by a conformational change of the particle.</text>
</comment>
<comment type="PTM">
    <molecule>VPg</molecule>
    <text evidence="7">Uridylylated by the polymerase and is covalently linked to the 5'-end of genomic RNA. This uridylylated form acts as a nucleotide-peptide primer for the polymerase.</text>
</comment>
<comment type="PTM">
    <molecule>Capsid protein VP4</molecule>
    <text evidence="8">Myristoylation is required during RNA encapsidation and formation of the mature virus particle.</text>
</comment>
<comment type="similarity">
    <text evidence="14">Belongs to the picornaviruses polyprotein family.</text>
</comment>
<keyword id="KW-0067">ATP-binding</keyword>
<keyword id="KW-0167">Capsid protein</keyword>
<keyword id="KW-0191">Covalent protein-RNA linkage</keyword>
<keyword id="KW-1262">Eukaryotic host gene expression shutoff by virus</keyword>
<keyword id="KW-1193">Eukaryotic host translation shutoff by virus</keyword>
<keyword id="KW-0347">Helicase</keyword>
<keyword id="KW-1035">Host cytoplasm</keyword>
<keyword id="KW-1036">Host cytoplasmic vesicle</keyword>
<keyword id="KW-1190">Host gene expression shutoff by virus</keyword>
<keyword id="KW-1043">Host membrane</keyword>
<keyword id="KW-1192">Host mRNA suppression by virus</keyword>
<keyword id="KW-1048">Host nucleus</keyword>
<keyword id="KW-0945">Host-virus interaction</keyword>
<keyword id="KW-0378">Hydrolase</keyword>
<keyword id="KW-1090">Inhibition of host innate immune response by virus</keyword>
<keyword id="KW-1099">Inhibition of host mRNA nuclear export by virus</keyword>
<keyword id="KW-1088">Inhibition of host RIG-I by virus</keyword>
<keyword id="KW-1113">Inhibition of host RLR pathway by virus</keyword>
<keyword id="KW-0407">Ion channel</keyword>
<keyword id="KW-0406">Ion transport</keyword>
<keyword id="KW-0449">Lipoprotein</keyword>
<keyword id="KW-0472">Membrane</keyword>
<keyword id="KW-0479">Metal-binding</keyword>
<keyword id="KW-0519">Myristate</keyword>
<keyword id="KW-0547">Nucleotide-binding</keyword>
<keyword id="KW-0548">Nucleotidyltransferase</keyword>
<keyword id="KW-0597">Phosphoprotein</keyword>
<keyword id="KW-0645">Protease</keyword>
<keyword id="KW-0694">RNA-binding</keyword>
<keyword id="KW-0696">RNA-directed RNA polymerase</keyword>
<keyword id="KW-1143">T=pseudo3 icosahedral capsid protein</keyword>
<keyword id="KW-0788">Thiol protease</keyword>
<keyword id="KW-0808">Transferase</keyword>
<keyword id="KW-0813">Transport</keyword>
<keyword id="KW-1161">Viral attachment to host cell</keyword>
<keyword id="KW-0899">Viral immunoevasion</keyword>
<keyword id="KW-1182">Viral ion channel</keyword>
<keyword id="KW-0693">Viral RNA replication</keyword>
<keyword id="KW-0946">Virion</keyword>
<keyword id="KW-1160">Virus entry into host cell</keyword>
<keyword id="KW-0862">Zinc</keyword>
<keyword id="KW-0863">Zinc-finger</keyword>
<evidence type="ECO:0000250" key="1"/>
<evidence type="ECO:0000250" key="2">
    <source>
        <dbReference type="UniProtKB" id="P03300"/>
    </source>
</evidence>
<evidence type="ECO:0000250" key="3">
    <source>
        <dbReference type="UniProtKB" id="P03304"/>
    </source>
</evidence>
<evidence type="ECO:0000250" key="4">
    <source>
        <dbReference type="UniProtKB" id="P03305"/>
    </source>
</evidence>
<evidence type="ECO:0000250" key="5">
    <source>
        <dbReference type="UniProtKB" id="P08545"/>
    </source>
</evidence>
<evidence type="ECO:0000250" key="6">
    <source>
        <dbReference type="UniProtKB" id="P08617"/>
    </source>
</evidence>
<evidence type="ECO:0000250" key="7">
    <source>
        <dbReference type="UniProtKB" id="P12296"/>
    </source>
</evidence>
<evidence type="ECO:0000250" key="8">
    <source>
        <dbReference type="UniProtKB" id="Q66282"/>
    </source>
</evidence>
<evidence type="ECO:0000250" key="9">
    <source>
        <dbReference type="UniProtKB" id="Q66765"/>
    </source>
</evidence>
<evidence type="ECO:0000255" key="10"/>
<evidence type="ECO:0000255" key="11">
    <source>
        <dbReference type="PROSITE-ProRule" id="PRU00539"/>
    </source>
</evidence>
<evidence type="ECO:0000255" key="12">
    <source>
        <dbReference type="PROSITE-ProRule" id="PRU00551"/>
    </source>
</evidence>
<evidence type="ECO:0000255" key="13">
    <source>
        <dbReference type="PROSITE-ProRule" id="PRU01222"/>
    </source>
</evidence>
<evidence type="ECO:0000305" key="14"/>
<name>POLG_EMCVD</name>
<accession>P17594</accession>
<protein>
    <recommendedName>
        <fullName>Genome polyprotein</fullName>
    </recommendedName>
    <component>
        <recommendedName>
            <fullName>Leader protein</fullName>
            <shortName>L</shortName>
        </recommendedName>
    </component>
    <component>
        <recommendedName>
            <fullName>Capsid protein VP0</fullName>
        </recommendedName>
        <alternativeName>
            <fullName>VP4-VP2</fullName>
        </alternativeName>
    </component>
    <component>
        <recommendedName>
            <fullName>Capsid protein VP4</fullName>
        </recommendedName>
        <alternativeName>
            <fullName>P1A</fullName>
        </alternativeName>
        <alternativeName>
            <fullName>Rho</fullName>
        </alternativeName>
        <alternativeName>
            <fullName>Virion protein 4</fullName>
        </alternativeName>
    </component>
    <component>
        <recommendedName>
            <fullName>Capsid protein VP2</fullName>
        </recommendedName>
        <alternativeName>
            <fullName>Beta</fullName>
        </alternativeName>
        <alternativeName>
            <fullName>P1B</fullName>
        </alternativeName>
        <alternativeName>
            <fullName>Virion protein 2</fullName>
        </alternativeName>
    </component>
    <component>
        <recommendedName>
            <fullName>Capsid protein VP3</fullName>
        </recommendedName>
        <alternativeName>
            <fullName>Gamma</fullName>
        </alternativeName>
        <alternativeName>
            <fullName>P1C</fullName>
        </alternativeName>
        <alternativeName>
            <fullName>Virion protein 3</fullName>
        </alternativeName>
    </component>
    <component>
        <recommendedName>
            <fullName>Capsid protein VP1</fullName>
        </recommendedName>
        <alternativeName>
            <fullName>Alpha</fullName>
        </alternativeName>
        <alternativeName>
            <fullName>P1D</fullName>
        </alternativeName>
        <alternativeName>
            <fullName>Virion protein 1</fullName>
        </alternativeName>
    </component>
    <component>
        <recommendedName>
            <fullName>Protein 2A</fullName>
            <shortName>P2A</shortName>
        </recommendedName>
        <alternativeName>
            <fullName>G</fullName>
        </alternativeName>
    </component>
    <component>
        <recommendedName>
            <fullName>Protein 2B</fullName>
            <shortName>I</shortName>
            <shortName>P2B</shortName>
        </recommendedName>
    </component>
    <component>
        <recommendedName>
            <fullName>Protein 2C</fullName>
            <shortName>C</shortName>
            <shortName>P2C</shortName>
            <ecNumber>3.6.4.13</ecNumber>
        </recommendedName>
    </component>
    <component>
        <recommendedName>
            <fullName>Protein 3A</fullName>
            <shortName>P3A</shortName>
        </recommendedName>
    </component>
    <component>
        <recommendedName>
            <fullName>VPg</fullName>
            <shortName>P3B</shortName>
        </recommendedName>
        <alternativeName>
            <fullName>H</fullName>
        </alternativeName>
        <alternativeName>
            <fullName>Protein 3B</fullName>
        </alternativeName>
    </component>
    <component>
        <recommendedName>
            <fullName>Protease 3C</fullName>
            <shortName>P3C</shortName>
            <ecNumber evidence="7">3.4.22.28</ecNumber>
        </recommendedName>
        <alternativeName>
            <fullName>Picornain 3C</fullName>
        </alternativeName>
        <alternativeName>
            <fullName>p22</fullName>
        </alternativeName>
    </component>
    <component>
        <recommendedName>
            <fullName>RNA-directed RNA polymerase</fullName>
            <shortName>RdRp</shortName>
            <ecNumber evidence="11">2.7.7.48</ecNumber>
        </recommendedName>
        <alternativeName>
            <fullName>3D polymerase</fullName>
            <shortName>3Dpol</shortName>
        </alternativeName>
        <alternativeName>
            <fullName>E</fullName>
        </alternativeName>
        <alternativeName>
            <fullName>Protein 3D</fullName>
            <shortName>3D</shortName>
        </alternativeName>
    </component>
</protein>
<organism>
    <name type="scientific">Encephalomyocarditis virus (strain emc-d diabetogenic)</name>
    <dbReference type="NCBI Taxonomy" id="12106"/>
    <lineage>
        <taxon>Viruses</taxon>
        <taxon>Riboviria</taxon>
        <taxon>Orthornavirae</taxon>
        <taxon>Pisuviricota</taxon>
        <taxon>Pisoniviricetes</taxon>
        <taxon>Picornavirales</taxon>
        <taxon>Picornaviridae</taxon>
        <taxon>Caphthovirinae</taxon>
        <taxon>Cardiovirus</taxon>
        <taxon>Cardiovirus A</taxon>
    </lineage>
</organism>
<reference key="1">
    <citation type="journal article" date="1989" name="Virology">
        <title>Genomic differences between the diabetogenic and nondiabetogenic variants of encephalomyocarditis virus.</title>
        <authorList>
            <person name="Bae Y.S."/>
            <person name="Eun H.M."/>
            <person name="Yoon J.W."/>
        </authorList>
    </citation>
    <scope>NUCLEOTIDE SEQUENCE [GENOMIC RNA]</scope>
</reference>
<reference key="2">
    <citation type="journal article" date="1989" name="Diabetes">
        <title>Molecular identification of diabetogenic viral gene.</title>
        <authorList>
            <person name="Bae Y.S."/>
            <person name="Eun H.M."/>
            <person name="Yoon J.W."/>
        </authorList>
    </citation>
    <scope>NUCLEOTIDE SEQUENCE [GENOMIC RNA]</scope>
</reference>
<feature type="chain" id="PRO_0000446095" description="Genome polyprotein">
    <location>
        <begin position="1"/>
        <end position="2292"/>
    </location>
</feature>
<feature type="chain" id="PRO_0000039804" description="Leader protein">
    <location>
        <begin position="1"/>
        <end position="67"/>
    </location>
</feature>
<feature type="chain" id="PRO_0000310969" description="Capsid protein VP0">
    <location>
        <begin position="68"/>
        <end position="393"/>
    </location>
</feature>
<feature type="chain" id="PRO_0000039805" description="Capsid protein VP4">
    <location>
        <begin position="68"/>
        <end position="137"/>
    </location>
</feature>
<feature type="chain" id="PRO_0000039806" description="Capsid protein VP2">
    <location>
        <begin position="138"/>
        <end position="393"/>
    </location>
</feature>
<feature type="chain" id="PRO_0000039807" description="Capsid protein VP3">
    <location>
        <begin position="394"/>
        <end position="624"/>
    </location>
</feature>
<feature type="chain" id="PRO_0000039808" description="Capsid protein VP1">
    <location>
        <begin position="625"/>
        <end position="901"/>
    </location>
</feature>
<feature type="chain" id="PRO_0000039809" description="Protein 2A">
    <location>
        <begin position="902"/>
        <end position="1044"/>
    </location>
</feature>
<feature type="chain" id="PRO_0000039810" description="Protein 2B">
    <location>
        <begin position="1045"/>
        <end position="1194"/>
    </location>
</feature>
<feature type="chain" id="PRO_0000039811" description="Protein 2C">
    <location>
        <begin position="1195"/>
        <end position="1519"/>
    </location>
</feature>
<feature type="chain" id="PRO_0000039812" description="Protein 3A" evidence="10">
    <location>
        <begin position="1520"/>
        <end position="1607"/>
    </location>
</feature>
<feature type="chain" id="PRO_0000039813" description="VPg" evidence="10">
    <location>
        <begin position="1608"/>
        <end position="1627"/>
    </location>
</feature>
<feature type="chain" id="PRO_0000039814" description="Protease 3C">
    <location>
        <begin position="1628"/>
        <end position="1832"/>
    </location>
</feature>
<feature type="chain" id="PRO_0000446096" description="RNA-directed RNA polymerase">
    <location>
        <begin position="1833"/>
        <end position="2292"/>
    </location>
</feature>
<feature type="domain" description="SF3 helicase" evidence="12">
    <location>
        <begin position="1281"/>
        <end position="1447"/>
    </location>
</feature>
<feature type="domain" description="Peptidase C3" evidence="13">
    <location>
        <begin position="1630"/>
        <end position="1822"/>
    </location>
</feature>
<feature type="domain" description="RdRp catalytic" evidence="11">
    <location>
        <begin position="2061"/>
        <end position="2179"/>
    </location>
</feature>
<feature type="zinc finger region" evidence="7">
    <location>
        <begin position="10"/>
        <end position="22"/>
    </location>
</feature>
<feature type="region of interest" description="Acidic" evidence="14">
    <location>
        <begin position="37"/>
        <end position="61"/>
    </location>
</feature>
<feature type="region of interest" description="Host EIF4E binding" evidence="9">
    <location>
        <begin position="1030"/>
        <end position="1036"/>
    </location>
</feature>
<feature type="short sequence motif" description="Nuclear localization signal" evidence="9">
    <location>
        <begin position="995"/>
        <end position="1003"/>
    </location>
</feature>
<feature type="active site" description="For protease 3C activity" evidence="13">
    <location>
        <position position="1673"/>
    </location>
</feature>
<feature type="active site" description="For protease 3C activity" evidence="13">
    <location>
        <position position="1707"/>
    </location>
</feature>
<feature type="active site" description="For protease 3C activity" evidence="13">
    <location>
        <position position="1786"/>
    </location>
</feature>
<feature type="active site" description="For RdRp activity" evidence="7">
    <location>
        <position position="2067"/>
    </location>
</feature>
<feature type="active site" description="For RdRp activity" evidence="7">
    <location>
        <position position="2165"/>
    </location>
</feature>
<feature type="binding site" evidence="7">
    <location>
        <position position="22"/>
    </location>
    <ligand>
        <name>RNA</name>
        <dbReference type="ChEBI" id="CHEBI:33697"/>
    </ligand>
</feature>
<feature type="binding site" evidence="7">
    <location>
        <position position="46"/>
    </location>
    <ligand>
        <name>RNA</name>
        <dbReference type="ChEBI" id="CHEBI:33697"/>
    </ligand>
</feature>
<feature type="binding site" evidence="7">
    <location>
        <position position="47"/>
    </location>
    <ligand>
        <name>RNA</name>
        <dbReference type="ChEBI" id="CHEBI:33697"/>
    </ligand>
</feature>
<feature type="binding site" evidence="7">
    <location>
        <position position="48"/>
    </location>
    <ligand>
        <name>RNA</name>
        <dbReference type="ChEBI" id="CHEBI:33697"/>
    </ligand>
</feature>
<feature type="binding site" evidence="7">
    <location>
        <position position="49"/>
    </location>
    <ligand>
        <name>RNA</name>
        <dbReference type="ChEBI" id="CHEBI:33697"/>
    </ligand>
</feature>
<feature type="binding site" evidence="7">
    <location>
        <position position="50"/>
    </location>
    <ligand>
        <name>RNA</name>
        <dbReference type="ChEBI" id="CHEBI:33697"/>
    </ligand>
</feature>
<feature type="binding site" evidence="7">
    <location>
        <position position="69"/>
    </location>
    <ligand>
        <name>RNA</name>
        <dbReference type="ChEBI" id="CHEBI:33697"/>
    </ligand>
</feature>
<feature type="binding site" evidence="7">
    <location>
        <position position="70"/>
    </location>
    <ligand>
        <name>RNA</name>
        <dbReference type="ChEBI" id="CHEBI:33697"/>
    </ligand>
</feature>
<feature type="binding site" evidence="7">
    <location>
        <position position="93"/>
    </location>
    <ligand>
        <name>RNA</name>
        <dbReference type="ChEBI" id="CHEBI:33697"/>
    </ligand>
</feature>
<feature type="binding site" evidence="7">
    <location>
        <position position="95"/>
    </location>
    <ligand>
        <name>RNA</name>
        <dbReference type="ChEBI" id="CHEBI:33697"/>
    </ligand>
</feature>
<feature type="binding site" evidence="7">
    <location>
        <position position="97"/>
    </location>
    <ligand>
        <name>RNA</name>
        <dbReference type="ChEBI" id="CHEBI:33697"/>
    </ligand>
</feature>
<feature type="binding site" evidence="7">
    <location>
        <position position="100"/>
    </location>
    <ligand>
        <name>RNA</name>
        <dbReference type="ChEBI" id="CHEBI:33697"/>
    </ligand>
</feature>
<feature type="binding site" evidence="12">
    <location>
        <begin position="1313"/>
        <end position="1320"/>
    </location>
    <ligand>
        <name>ATP</name>
        <dbReference type="ChEBI" id="CHEBI:30616"/>
    </ligand>
</feature>
<feature type="site" description="Cleavage" evidence="10">
    <location>
        <begin position="137"/>
        <end position="138"/>
    </location>
</feature>
<feature type="site" description="Cleavage; by protease 3C" evidence="3">
    <location>
        <begin position="393"/>
        <end position="394"/>
    </location>
</feature>
<feature type="site" description="Cleavage; by protease 3C" evidence="3">
    <location>
        <begin position="624"/>
        <end position="625"/>
    </location>
</feature>
<feature type="site" description="Cleavage; by protease 3C" evidence="3">
    <location>
        <begin position="901"/>
        <end position="902"/>
    </location>
</feature>
<feature type="site" description="Cleavage; by ribosomal skip" evidence="3">
    <location>
        <begin position="1044"/>
        <end position="1045"/>
    </location>
</feature>
<feature type="site" description="Cleavage; by protease 3C" evidence="3">
    <location>
        <begin position="1194"/>
        <end position="1195"/>
    </location>
</feature>
<feature type="site" description="Cleavage; by protease 3C" evidence="3">
    <location>
        <begin position="1519"/>
        <end position="1520"/>
    </location>
</feature>
<feature type="site" description="Cleavage; by protease 3C" evidence="3">
    <location>
        <begin position="1607"/>
        <end position="1608"/>
    </location>
</feature>
<feature type="site" description="Cleavage; by protease 3C" evidence="3">
    <location>
        <begin position="1627"/>
        <end position="1628"/>
    </location>
</feature>
<feature type="site" description="Cleavage; by protease 3C" evidence="3">
    <location>
        <begin position="1832"/>
        <end position="1833"/>
    </location>
</feature>
<feature type="modified residue" description="Phosphotyrosine; by host SYK" evidence="9">
    <location>
        <position position="41"/>
    </location>
</feature>
<feature type="modified residue" description="Phosphothreonine; by host CK2" evidence="9">
    <location>
        <position position="47"/>
    </location>
</feature>
<feature type="modified residue" description="O-(5'-phospho-RNA)-tyrosine" evidence="2">
    <location>
        <position position="1610"/>
    </location>
</feature>
<feature type="lipid moiety-binding region" description="N-myristoyl glycine; by host" evidence="8">
    <location>
        <position position="68"/>
    </location>
</feature>
<organismHost>
    <name type="scientific">Homo sapiens</name>
    <name type="common">Human</name>
    <dbReference type="NCBI Taxonomy" id="9606"/>
</organismHost>
<organismHost>
    <name type="scientific">Mus musculus</name>
    <name type="common">Mouse</name>
    <dbReference type="NCBI Taxonomy" id="10090"/>
</organismHost>
<organismHost>
    <name type="scientific">Sigmodon hispidus</name>
    <name type="common">Hispid cotton rat</name>
    <dbReference type="NCBI Taxonomy" id="42415"/>
</organismHost>
<organismHost>
    <name type="scientific">Sus scrofa</name>
    <name type="common">Pig</name>
    <dbReference type="NCBI Taxonomy" id="9823"/>
</organismHost>
<dbReference type="EC" id="3.6.4.13"/>
<dbReference type="EC" id="3.4.22.28" evidence="7"/>
<dbReference type="EC" id="2.7.7.48" evidence="11"/>
<dbReference type="EMBL" id="M22458">
    <property type="protein sequence ID" value="AAA43034.1"/>
    <property type="molecule type" value="Genomic_RNA"/>
</dbReference>
<dbReference type="PIR" id="A31473">
    <property type="entry name" value="GNNYED"/>
</dbReference>
<dbReference type="SMR" id="P17594"/>
<dbReference type="MEROPS" id="C03.009"/>
<dbReference type="TCDB" id="1.A.85.1.6">
    <property type="family name" value="the poliovirus 2b viroporin (2b viroporin) family"/>
</dbReference>
<dbReference type="Proteomes" id="UP000008662">
    <property type="component" value="Genome"/>
</dbReference>
<dbReference type="GO" id="GO:0044162">
    <property type="term" value="C:host cell cytoplasmic vesicle membrane"/>
    <property type="evidence" value="ECO:0007669"/>
    <property type="project" value="UniProtKB-SubCell"/>
</dbReference>
<dbReference type="GO" id="GO:0044196">
    <property type="term" value="C:host cell nucleolus"/>
    <property type="evidence" value="ECO:0007669"/>
    <property type="project" value="UniProtKB-SubCell"/>
</dbReference>
<dbReference type="GO" id="GO:0016020">
    <property type="term" value="C:membrane"/>
    <property type="evidence" value="ECO:0007669"/>
    <property type="project" value="UniProtKB-KW"/>
</dbReference>
<dbReference type="GO" id="GO:0039618">
    <property type="term" value="C:T=pseudo3 icosahedral viral capsid"/>
    <property type="evidence" value="ECO:0007669"/>
    <property type="project" value="UniProtKB-KW"/>
</dbReference>
<dbReference type="GO" id="GO:0005524">
    <property type="term" value="F:ATP binding"/>
    <property type="evidence" value="ECO:0007669"/>
    <property type="project" value="UniProtKB-KW"/>
</dbReference>
<dbReference type="GO" id="GO:0016887">
    <property type="term" value="F:ATP hydrolysis activity"/>
    <property type="evidence" value="ECO:0007669"/>
    <property type="project" value="RHEA"/>
</dbReference>
<dbReference type="GO" id="GO:0015267">
    <property type="term" value="F:channel activity"/>
    <property type="evidence" value="ECO:0007669"/>
    <property type="project" value="UniProtKB-KW"/>
</dbReference>
<dbReference type="GO" id="GO:0004197">
    <property type="term" value="F:cysteine-type endopeptidase activity"/>
    <property type="evidence" value="ECO:0007669"/>
    <property type="project" value="UniProtKB-EC"/>
</dbReference>
<dbReference type="GO" id="GO:0003723">
    <property type="term" value="F:RNA binding"/>
    <property type="evidence" value="ECO:0007669"/>
    <property type="project" value="UniProtKB-KW"/>
</dbReference>
<dbReference type="GO" id="GO:0003724">
    <property type="term" value="F:RNA helicase activity"/>
    <property type="evidence" value="ECO:0007669"/>
    <property type="project" value="UniProtKB-EC"/>
</dbReference>
<dbReference type="GO" id="GO:0003968">
    <property type="term" value="F:RNA-directed RNA polymerase activity"/>
    <property type="evidence" value="ECO:0007669"/>
    <property type="project" value="UniProtKB-KW"/>
</dbReference>
<dbReference type="GO" id="GO:0005198">
    <property type="term" value="F:structural molecule activity"/>
    <property type="evidence" value="ECO:0007669"/>
    <property type="project" value="InterPro"/>
</dbReference>
<dbReference type="GO" id="GO:0008270">
    <property type="term" value="F:zinc ion binding"/>
    <property type="evidence" value="ECO:0007669"/>
    <property type="project" value="UniProtKB-KW"/>
</dbReference>
<dbReference type="GO" id="GO:0006351">
    <property type="term" value="P:DNA-templated transcription"/>
    <property type="evidence" value="ECO:0007669"/>
    <property type="project" value="InterPro"/>
</dbReference>
<dbReference type="GO" id="GO:0034220">
    <property type="term" value="P:monoatomic ion transmembrane transport"/>
    <property type="evidence" value="ECO:0007669"/>
    <property type="project" value="UniProtKB-KW"/>
</dbReference>
<dbReference type="GO" id="GO:0006508">
    <property type="term" value="P:proteolysis"/>
    <property type="evidence" value="ECO:0007669"/>
    <property type="project" value="UniProtKB-KW"/>
</dbReference>
<dbReference type="GO" id="GO:0046718">
    <property type="term" value="P:symbiont entry into host cell"/>
    <property type="evidence" value="ECO:0007669"/>
    <property type="project" value="UniProtKB-KW"/>
</dbReference>
<dbReference type="GO" id="GO:0039520">
    <property type="term" value="P:symbiont-mediated activation of host autophagy"/>
    <property type="evidence" value="ECO:0000250"/>
    <property type="project" value="UniProtKB"/>
</dbReference>
<dbReference type="GO" id="GO:0039540">
    <property type="term" value="P:symbiont-mediated suppression of host cytoplasmic pattern recognition receptor signaling pathway via inhibition of RIG-I activity"/>
    <property type="evidence" value="ECO:0007669"/>
    <property type="project" value="UniProtKB-KW"/>
</dbReference>
<dbReference type="GO" id="GO:0039522">
    <property type="term" value="P:symbiont-mediated suppression of host mRNA export from nucleus"/>
    <property type="evidence" value="ECO:0007669"/>
    <property type="project" value="UniProtKB-KW"/>
</dbReference>
<dbReference type="GO" id="GO:0039694">
    <property type="term" value="P:viral RNA genome replication"/>
    <property type="evidence" value="ECO:0007669"/>
    <property type="project" value="InterPro"/>
</dbReference>
<dbReference type="GO" id="GO:0019062">
    <property type="term" value="P:virion attachment to host cell"/>
    <property type="evidence" value="ECO:0007669"/>
    <property type="project" value="UniProtKB-KW"/>
</dbReference>
<dbReference type="CDD" id="cd23211">
    <property type="entry name" value="Cardiovirus_RdRp"/>
    <property type="match status" value="1"/>
</dbReference>
<dbReference type="CDD" id="cd00205">
    <property type="entry name" value="rhv_like"/>
    <property type="match status" value="3"/>
</dbReference>
<dbReference type="FunFam" id="1.20.960.20:FF:000002">
    <property type="entry name" value="Genome polyprotein"/>
    <property type="match status" value="1"/>
</dbReference>
<dbReference type="FunFam" id="2.40.10.10:FF:000145">
    <property type="entry name" value="Genome polyprotein"/>
    <property type="match status" value="1"/>
</dbReference>
<dbReference type="FunFam" id="2.60.120.20:FF:000009">
    <property type="entry name" value="Genome polyprotein"/>
    <property type="match status" value="1"/>
</dbReference>
<dbReference type="FunFam" id="2.60.120.20:FF:000013">
    <property type="entry name" value="Genome polyprotein"/>
    <property type="match status" value="1"/>
</dbReference>
<dbReference type="FunFam" id="3.30.70.270:FF:000046">
    <property type="entry name" value="Genome polyprotein"/>
    <property type="match status" value="1"/>
</dbReference>
<dbReference type="FunFam" id="3.30.70.270:FF:000065">
    <property type="entry name" value="Genome polyprotein"/>
    <property type="match status" value="1"/>
</dbReference>
<dbReference type="FunFam" id="4.10.90.10:FF:000002">
    <property type="entry name" value="Genome polyprotein"/>
    <property type="match status" value="1"/>
</dbReference>
<dbReference type="Gene3D" id="1.20.960.20">
    <property type="match status" value="1"/>
</dbReference>
<dbReference type="Gene3D" id="2.60.120.20">
    <property type="match status" value="3"/>
</dbReference>
<dbReference type="Gene3D" id="3.30.70.270">
    <property type="match status" value="2"/>
</dbReference>
<dbReference type="Gene3D" id="4.10.90.10">
    <property type="entry name" value="Capsid protein VP4 superfamily, Picornavirus"/>
    <property type="match status" value="1"/>
</dbReference>
<dbReference type="Gene3D" id="2.40.10.10">
    <property type="entry name" value="Trypsin-like serine proteases"/>
    <property type="match status" value="1"/>
</dbReference>
<dbReference type="InterPro" id="IPR015031">
    <property type="entry name" value="Capsid_VP4_Picornavir"/>
</dbReference>
<dbReference type="InterPro" id="IPR037080">
    <property type="entry name" value="Capsid_VP4_sf_Picornavirus"/>
</dbReference>
<dbReference type="InterPro" id="IPR043502">
    <property type="entry name" value="DNA/RNA_pol_sf"/>
</dbReference>
<dbReference type="InterPro" id="IPR004004">
    <property type="entry name" value="Helic/Pol/Pept_Calicivir-typ"/>
</dbReference>
<dbReference type="InterPro" id="IPR000605">
    <property type="entry name" value="Helicase_SF3_ssDNA/RNA_vir"/>
</dbReference>
<dbReference type="InterPro" id="IPR014759">
    <property type="entry name" value="Helicase_SF3_ssRNA_vir"/>
</dbReference>
<dbReference type="InterPro" id="IPR021573">
    <property type="entry name" value="Leader_pept_picornaV"/>
</dbReference>
<dbReference type="InterPro" id="IPR044067">
    <property type="entry name" value="PCV_3C_PRO"/>
</dbReference>
<dbReference type="InterPro" id="IPR000199">
    <property type="entry name" value="Peptidase_C3A/C3B_picornavir"/>
</dbReference>
<dbReference type="InterPro" id="IPR009003">
    <property type="entry name" value="Peptidase_S1_PA"/>
</dbReference>
<dbReference type="InterPro" id="IPR043504">
    <property type="entry name" value="Peptidase_S1_PA_chymotrypsin"/>
</dbReference>
<dbReference type="InterPro" id="IPR001676">
    <property type="entry name" value="Picornavirus_capsid"/>
</dbReference>
<dbReference type="InterPro" id="IPR043128">
    <property type="entry name" value="Rev_trsase/Diguanyl_cyclase"/>
</dbReference>
<dbReference type="InterPro" id="IPR033703">
    <property type="entry name" value="Rhv-like"/>
</dbReference>
<dbReference type="InterPro" id="IPR001205">
    <property type="entry name" value="RNA-dir_pol_C"/>
</dbReference>
<dbReference type="InterPro" id="IPR007094">
    <property type="entry name" value="RNA-dir_pol_PSvirus"/>
</dbReference>
<dbReference type="InterPro" id="IPR029053">
    <property type="entry name" value="Viral_coat"/>
</dbReference>
<dbReference type="InterPro" id="IPR037243">
    <property type="entry name" value="Viral_lead_polypep_zc_finger"/>
</dbReference>
<dbReference type="Pfam" id="PF00548">
    <property type="entry name" value="Peptidase_C3"/>
    <property type="match status" value="1"/>
</dbReference>
<dbReference type="Pfam" id="PF00680">
    <property type="entry name" value="RdRP_1"/>
    <property type="match status" value="1"/>
</dbReference>
<dbReference type="Pfam" id="PF00073">
    <property type="entry name" value="Rhv"/>
    <property type="match status" value="2"/>
</dbReference>
<dbReference type="Pfam" id="PF22663">
    <property type="entry name" value="Rhv_5"/>
    <property type="match status" value="1"/>
</dbReference>
<dbReference type="Pfam" id="PF00910">
    <property type="entry name" value="RNA_helicase"/>
    <property type="match status" value="1"/>
</dbReference>
<dbReference type="Pfam" id="PF08935">
    <property type="entry name" value="VP4_2"/>
    <property type="match status" value="1"/>
</dbReference>
<dbReference type="Pfam" id="PF11475">
    <property type="entry name" value="VP_N-CPKC"/>
    <property type="match status" value="1"/>
</dbReference>
<dbReference type="PRINTS" id="PR00918">
    <property type="entry name" value="CALICVIRUSNS"/>
</dbReference>
<dbReference type="SUPFAM" id="SSF56672">
    <property type="entry name" value="DNA/RNA polymerases"/>
    <property type="match status" value="1"/>
</dbReference>
<dbReference type="SUPFAM" id="SSF88633">
    <property type="entry name" value="Positive stranded ssRNA viruses"/>
    <property type="match status" value="2"/>
</dbReference>
<dbReference type="SUPFAM" id="SSF50494">
    <property type="entry name" value="Trypsin-like serine proteases"/>
    <property type="match status" value="1"/>
</dbReference>
<dbReference type="SUPFAM" id="SSF144251">
    <property type="entry name" value="Viral leader polypeptide zinc finger"/>
    <property type="match status" value="1"/>
</dbReference>
<dbReference type="PROSITE" id="PS51874">
    <property type="entry name" value="PCV_3C_PRO"/>
    <property type="match status" value="1"/>
</dbReference>
<dbReference type="PROSITE" id="PS50507">
    <property type="entry name" value="RDRP_SSRNA_POS"/>
    <property type="match status" value="1"/>
</dbReference>
<dbReference type="PROSITE" id="PS51218">
    <property type="entry name" value="SF3_HELICASE_2"/>
    <property type="match status" value="1"/>
</dbReference>